<gene>
    <name evidence="1" type="primary">rpmF</name>
    <name type="ordered locus">BURPS1710b_2909</name>
</gene>
<dbReference type="EMBL" id="CP000124">
    <property type="protein sequence ID" value="ABA49158.1"/>
    <property type="molecule type" value="Genomic_DNA"/>
</dbReference>
<dbReference type="RefSeq" id="WP_004192741.1">
    <property type="nucleotide sequence ID" value="NC_007434.1"/>
</dbReference>
<dbReference type="SMR" id="Q3JQ63"/>
<dbReference type="EnsemblBacteria" id="ABA49158">
    <property type="protein sequence ID" value="ABA49158"/>
    <property type="gene ID" value="BURPS1710b_2909"/>
</dbReference>
<dbReference type="GeneID" id="93061024"/>
<dbReference type="KEGG" id="bpm:BURPS1710b_2909"/>
<dbReference type="HOGENOM" id="CLU_129084_2_1_4"/>
<dbReference type="Proteomes" id="UP000002700">
    <property type="component" value="Chromosome I"/>
</dbReference>
<dbReference type="GO" id="GO:0015934">
    <property type="term" value="C:large ribosomal subunit"/>
    <property type="evidence" value="ECO:0007669"/>
    <property type="project" value="InterPro"/>
</dbReference>
<dbReference type="GO" id="GO:0003735">
    <property type="term" value="F:structural constituent of ribosome"/>
    <property type="evidence" value="ECO:0007669"/>
    <property type="project" value="InterPro"/>
</dbReference>
<dbReference type="GO" id="GO:0006412">
    <property type="term" value="P:translation"/>
    <property type="evidence" value="ECO:0007669"/>
    <property type="project" value="UniProtKB-UniRule"/>
</dbReference>
<dbReference type="HAMAP" id="MF_00340">
    <property type="entry name" value="Ribosomal_bL32"/>
    <property type="match status" value="1"/>
</dbReference>
<dbReference type="InterPro" id="IPR002677">
    <property type="entry name" value="Ribosomal_bL32"/>
</dbReference>
<dbReference type="InterPro" id="IPR044957">
    <property type="entry name" value="Ribosomal_bL32_bact"/>
</dbReference>
<dbReference type="InterPro" id="IPR011332">
    <property type="entry name" value="Ribosomal_zn-bd"/>
</dbReference>
<dbReference type="NCBIfam" id="TIGR01031">
    <property type="entry name" value="rpmF_bact"/>
    <property type="match status" value="1"/>
</dbReference>
<dbReference type="PANTHER" id="PTHR35534">
    <property type="entry name" value="50S RIBOSOMAL PROTEIN L32"/>
    <property type="match status" value="1"/>
</dbReference>
<dbReference type="PANTHER" id="PTHR35534:SF1">
    <property type="entry name" value="LARGE RIBOSOMAL SUBUNIT PROTEIN BL32"/>
    <property type="match status" value="1"/>
</dbReference>
<dbReference type="Pfam" id="PF01783">
    <property type="entry name" value="Ribosomal_L32p"/>
    <property type="match status" value="1"/>
</dbReference>
<dbReference type="SUPFAM" id="SSF57829">
    <property type="entry name" value="Zn-binding ribosomal proteins"/>
    <property type="match status" value="1"/>
</dbReference>
<feature type="chain" id="PRO_0000225710" description="Large ribosomal subunit protein bL32">
    <location>
        <begin position="1"/>
        <end position="59"/>
    </location>
</feature>
<feature type="region of interest" description="Disordered" evidence="2">
    <location>
        <begin position="1"/>
        <end position="59"/>
    </location>
</feature>
<feature type="compositionally biased region" description="Basic residues" evidence="2">
    <location>
        <begin position="49"/>
        <end position="59"/>
    </location>
</feature>
<comment type="similarity">
    <text evidence="1">Belongs to the bacterial ribosomal protein bL32 family.</text>
</comment>
<proteinExistence type="inferred from homology"/>
<reference key="1">
    <citation type="journal article" date="2010" name="Genome Biol. Evol.">
        <title>Continuing evolution of Burkholderia mallei through genome reduction and large-scale rearrangements.</title>
        <authorList>
            <person name="Losada L."/>
            <person name="Ronning C.M."/>
            <person name="DeShazer D."/>
            <person name="Woods D."/>
            <person name="Fedorova N."/>
            <person name="Kim H.S."/>
            <person name="Shabalina S.A."/>
            <person name="Pearson T.R."/>
            <person name="Brinkac L."/>
            <person name="Tan P."/>
            <person name="Nandi T."/>
            <person name="Crabtree J."/>
            <person name="Badger J."/>
            <person name="Beckstrom-Sternberg S."/>
            <person name="Saqib M."/>
            <person name="Schutzer S.E."/>
            <person name="Keim P."/>
            <person name="Nierman W.C."/>
        </authorList>
    </citation>
    <scope>NUCLEOTIDE SEQUENCE [LARGE SCALE GENOMIC DNA]</scope>
    <source>
        <strain>1710b</strain>
    </source>
</reference>
<name>RL32_BURP1</name>
<keyword id="KW-0687">Ribonucleoprotein</keyword>
<keyword id="KW-0689">Ribosomal protein</keyword>
<accession>Q3JQ63</accession>
<sequence length="59" mass="6683">MAVQQNKKSPSKRGMHRSHDFLTTSPLAVEPSTGEVHLRHHISPNGYYRGKKVVKTKND</sequence>
<evidence type="ECO:0000255" key="1">
    <source>
        <dbReference type="HAMAP-Rule" id="MF_00340"/>
    </source>
</evidence>
<evidence type="ECO:0000256" key="2">
    <source>
        <dbReference type="SAM" id="MobiDB-lite"/>
    </source>
</evidence>
<evidence type="ECO:0000305" key="3"/>
<protein>
    <recommendedName>
        <fullName evidence="1">Large ribosomal subunit protein bL32</fullName>
    </recommendedName>
    <alternativeName>
        <fullName evidence="3">50S ribosomal protein L32</fullName>
    </alternativeName>
</protein>
<organism>
    <name type="scientific">Burkholderia pseudomallei (strain 1710b)</name>
    <dbReference type="NCBI Taxonomy" id="320372"/>
    <lineage>
        <taxon>Bacteria</taxon>
        <taxon>Pseudomonadati</taxon>
        <taxon>Pseudomonadota</taxon>
        <taxon>Betaproteobacteria</taxon>
        <taxon>Burkholderiales</taxon>
        <taxon>Burkholderiaceae</taxon>
        <taxon>Burkholderia</taxon>
        <taxon>pseudomallei group</taxon>
    </lineage>
</organism>